<reference key="1">
    <citation type="journal article" date="1995" name="Appl. Environ. Microbiol.">
        <title>Characterization of biphenyl catabolic genes of gram-positive polychlorinated biphenyl degrader Rhodococcus sp. strain RHA1.</title>
        <authorList>
            <person name="Masai E."/>
            <person name="Yamada A."/>
            <person name="Healy J.M."/>
            <person name="Hatta T."/>
            <person name="Kimbara K."/>
            <person name="Fukuda M."/>
            <person name="Yano K."/>
        </authorList>
    </citation>
    <scope>NUCLEOTIDE SEQUENCE [GENOMIC DNA]</scope>
    <scope>PATHWAY</scope>
    <source>
        <strain>RHA1</strain>
    </source>
</reference>
<reference key="2">
    <citation type="journal article" date="2006" name="Proc. Natl. Acad. Sci. U.S.A.">
        <title>The complete genome of Rhodococcus sp. RHA1 provides insights into a catabolic powerhouse.</title>
        <authorList>
            <person name="McLeod M.P."/>
            <person name="Warren R.L."/>
            <person name="Hsiao W.W.L."/>
            <person name="Araki N."/>
            <person name="Myhre M."/>
            <person name="Fernandes C."/>
            <person name="Miyazawa D."/>
            <person name="Wong W."/>
            <person name="Lillquist A.L."/>
            <person name="Wang D."/>
            <person name="Dosanjh M."/>
            <person name="Hara H."/>
            <person name="Petrescu A."/>
            <person name="Morin R.D."/>
            <person name="Yang G."/>
            <person name="Stott J.M."/>
            <person name="Schein J.E."/>
            <person name="Shin H."/>
            <person name="Smailus D."/>
            <person name="Siddiqui A.S."/>
            <person name="Marra M.A."/>
            <person name="Jones S.J.M."/>
            <person name="Holt R."/>
            <person name="Brinkman F.S.L."/>
            <person name="Miyauchi K."/>
            <person name="Fukuda M."/>
            <person name="Davies J.E."/>
            <person name="Mohn W.W."/>
            <person name="Eltis L.D."/>
        </authorList>
    </citation>
    <scope>NUCLEOTIDE SEQUENCE [LARGE SCALE GENOMIC DNA]</scope>
    <source>
        <strain>RHA1</strain>
    </source>
</reference>
<reference key="3">
    <citation type="journal article" date="2004" name="J. Bacteriol.">
        <title>Characterization of transcriptional regulatory genes for biphenyl degradation in Rhodococcus sp. strain RHA1.</title>
        <authorList>
            <person name="Takeda H."/>
            <person name="Yamada A."/>
            <person name="Miyauchi K."/>
            <person name="Masai E."/>
            <person name="Fukuda M."/>
        </authorList>
    </citation>
    <scope>INDUCTION</scope>
    <source>
        <strain>RHA1</strain>
    </source>
</reference>
<reference key="4">
    <citation type="journal article" date="2007" name="Biosci. Biotechnol. Biochem.">
        <title>Characterization of two biphenyl dioxygenases for biphenyl/PCB degradation in A PCB degrader, Rhodococcus sp. strain RHA1.</title>
        <authorList>
            <person name="Iwasaki T."/>
            <person name="Takeda H."/>
            <person name="Miyauchi K."/>
            <person name="Yamada T."/>
            <person name="Masai E."/>
            <person name="Fukuda M."/>
        </authorList>
    </citation>
    <scope>FUNCTION IN A BDO SYSTEM</scope>
    <source>
        <strain>RHA1</strain>
    </source>
</reference>
<feature type="chain" id="PRO_0000430661" description="Biphenyl 2,3-dioxygenase, ferredoxin component">
    <location>
        <begin position="1"/>
        <end position="107"/>
    </location>
</feature>
<feature type="domain" description="Rieske" evidence="1">
    <location>
        <begin position="4"/>
        <end position="99"/>
    </location>
</feature>
<feature type="binding site" evidence="1">
    <location>
        <position position="43"/>
    </location>
    <ligand>
        <name>[2Fe-2S] cluster</name>
        <dbReference type="ChEBI" id="CHEBI:190135"/>
    </ligand>
</feature>
<feature type="binding site" evidence="1">
    <location>
        <position position="45"/>
    </location>
    <ligand>
        <name>[2Fe-2S] cluster</name>
        <dbReference type="ChEBI" id="CHEBI:190135"/>
    </ligand>
</feature>
<feature type="binding site" evidence="1">
    <location>
        <position position="62"/>
    </location>
    <ligand>
        <name>[2Fe-2S] cluster</name>
        <dbReference type="ChEBI" id="CHEBI:190135"/>
    </ligand>
</feature>
<feature type="binding site" evidence="1">
    <location>
        <position position="65"/>
    </location>
    <ligand>
        <name>[2Fe-2S] cluster</name>
        <dbReference type="ChEBI" id="CHEBI:190135"/>
    </ligand>
</feature>
<dbReference type="EMBL" id="D32142">
    <property type="protein sequence ID" value="BAA06870.1"/>
    <property type="molecule type" value="Genomic_DNA"/>
</dbReference>
<dbReference type="EMBL" id="CP000432">
    <property type="protein sequence ID" value="ABG99105.1"/>
    <property type="status" value="ALT_INIT"/>
    <property type="molecule type" value="Genomic_DNA"/>
</dbReference>
<dbReference type="RefSeq" id="WP_050787550.1">
    <property type="nucleotide sequence ID" value="NC_008269.1"/>
</dbReference>
<dbReference type="SMR" id="Q53124"/>
<dbReference type="KEGG" id="rha:RHA1_ro08058"/>
<dbReference type="PATRIC" id="fig|101510.16.peg.7405"/>
<dbReference type="HOGENOM" id="CLU_055690_5_2_11"/>
<dbReference type="OrthoDB" id="147178at2"/>
<dbReference type="UniPathway" id="UPA00155"/>
<dbReference type="Proteomes" id="UP000008710">
    <property type="component" value="Plasmid pRHL1"/>
</dbReference>
<dbReference type="GO" id="GO:0051537">
    <property type="term" value="F:2 iron, 2 sulfur cluster binding"/>
    <property type="evidence" value="ECO:0007669"/>
    <property type="project" value="UniProtKB-KW"/>
</dbReference>
<dbReference type="GO" id="GO:0046872">
    <property type="term" value="F:metal ion binding"/>
    <property type="evidence" value="ECO:0007669"/>
    <property type="project" value="UniProtKB-KW"/>
</dbReference>
<dbReference type="GO" id="GO:0004497">
    <property type="term" value="F:monooxygenase activity"/>
    <property type="evidence" value="ECO:0007669"/>
    <property type="project" value="UniProtKB-ARBA"/>
</dbReference>
<dbReference type="GO" id="GO:0016705">
    <property type="term" value="F:oxidoreductase activity, acting on paired donors, with incorporation or reduction of molecular oxygen"/>
    <property type="evidence" value="ECO:0007669"/>
    <property type="project" value="UniProtKB-ARBA"/>
</dbReference>
<dbReference type="GO" id="GO:0009056">
    <property type="term" value="P:catabolic process"/>
    <property type="evidence" value="ECO:0007669"/>
    <property type="project" value="UniProtKB-KW"/>
</dbReference>
<dbReference type="CDD" id="cd03528">
    <property type="entry name" value="Rieske_RO_ferredoxin"/>
    <property type="match status" value="1"/>
</dbReference>
<dbReference type="Gene3D" id="2.102.10.10">
    <property type="entry name" value="Rieske [2Fe-2S] iron-sulphur domain"/>
    <property type="match status" value="1"/>
</dbReference>
<dbReference type="InterPro" id="IPR017941">
    <property type="entry name" value="Rieske_2Fe-2S"/>
</dbReference>
<dbReference type="InterPro" id="IPR036922">
    <property type="entry name" value="Rieske_2Fe-2S_sf"/>
</dbReference>
<dbReference type="PANTHER" id="PTHR21496:SF23">
    <property type="entry name" value="3-PHENYLPROPIONATE_CINNAMIC ACID DIOXYGENASE FERREDOXIN SUBUNIT"/>
    <property type="match status" value="1"/>
</dbReference>
<dbReference type="PANTHER" id="PTHR21496">
    <property type="entry name" value="FERREDOXIN-RELATED"/>
    <property type="match status" value="1"/>
</dbReference>
<dbReference type="Pfam" id="PF00355">
    <property type="entry name" value="Rieske"/>
    <property type="match status" value="1"/>
</dbReference>
<dbReference type="SUPFAM" id="SSF50022">
    <property type="entry name" value="ISP domain"/>
    <property type="match status" value="1"/>
</dbReference>
<dbReference type="PROSITE" id="PS51296">
    <property type="entry name" value="RIESKE"/>
    <property type="match status" value="1"/>
</dbReference>
<geneLocation type="plasmid" evidence="6">
    <name>pRHL1</name>
</geneLocation>
<evidence type="ECO:0000255" key="1">
    <source>
        <dbReference type="PROSITE-ProRule" id="PRU00628"/>
    </source>
</evidence>
<evidence type="ECO:0000269" key="2">
    <source>
    </source>
</evidence>
<evidence type="ECO:0000303" key="3">
    <source>
    </source>
</evidence>
<evidence type="ECO:0000303" key="4">
    <source>
    </source>
</evidence>
<evidence type="ECO:0000305" key="5"/>
<evidence type="ECO:0000312" key="6">
    <source>
        <dbReference type="EMBL" id="ABG99105.1"/>
    </source>
</evidence>
<organism>
    <name type="scientific">Rhodococcus jostii (strain RHA1)</name>
    <dbReference type="NCBI Taxonomy" id="101510"/>
    <lineage>
        <taxon>Bacteria</taxon>
        <taxon>Bacillati</taxon>
        <taxon>Actinomycetota</taxon>
        <taxon>Actinomycetes</taxon>
        <taxon>Mycobacteriales</taxon>
        <taxon>Nocardiaceae</taxon>
        <taxon>Rhodococcus</taxon>
    </lineage>
</organism>
<keyword id="KW-0001">2Fe-2S</keyword>
<keyword id="KW-0058">Aromatic hydrocarbons catabolism</keyword>
<keyword id="KW-0249">Electron transport</keyword>
<keyword id="KW-0408">Iron</keyword>
<keyword id="KW-0411">Iron-sulfur</keyword>
<keyword id="KW-0479">Metal-binding</keyword>
<keyword id="KW-0614">Plasmid</keyword>
<keyword id="KW-0813">Transport</keyword>
<accession>Q53124</accession>
<accession>Q0S031</accession>
<comment type="function">
    <text evidence="3 4">Ferredoxin component of the biphenyl dioxygenase system that catalyzes the stereospecific dihydroxylation of the aromatic ring of biphenyl, yielding a dihydrodiol compound. Is likely involved in biphenyl degradation that allows growth of Rhodococcus sp. strain RHA1 on biphenyl as the sole source of carbon and energy. The dioxygenase system can also use naphtalene and 4-chlorobiphenyl (4-CB) as substrates, as well as some polychlorinated biphenyls (PCB) such as 2,2'-dichlorobiphenyl, 2,3-dichlorobiphenyl and 2,5,2'-trichlorobiphenyl. It exhibits weak activity toward dibenzofuran and dibenzo-p-dioxin. Electrons are transferred from NADH to the [2Fe-2S] cluster in BphA1 via FAD of BphA4 and [2Fe-2S] cluster of BphA3.</text>
</comment>
<comment type="cofactor">
    <cofactor evidence="1">
        <name>[2Fe-2S] cluster</name>
        <dbReference type="ChEBI" id="CHEBI:190135"/>
    </cofactor>
    <text evidence="1">Binds 1 [2Fe-2S] cluster per subunit.</text>
</comment>
<comment type="pathway">
    <text evidence="4">Xenobiotic degradation; biphenyl degradation.</text>
</comment>
<comment type="subunit">
    <text evidence="3">The multicomponent biphenyl dioxygenase system is composed of a ferredoxin reductase (BphA4), a ferredoxin (BphA3), and a terminal oxygenase (BphA1A2).</text>
</comment>
<comment type="induction">
    <text evidence="2">Transcription is up-regulated by aromatic compounds including biphenyl, ethylbenzene, benzene, toluene, xylene, cumene, cymene, and chlorinated benzenes. Is under the control of the BphST two-component regulatory system.</text>
</comment>
<comment type="similarity">
    <text evidence="5">Belongs to the bacterial ring-hydroxylating dioxygenase ferredoxin component family.</text>
</comment>
<comment type="sequence caution" evidence="5">
    <conflict type="erroneous initiation">
        <sequence resource="EMBL-CDS" id="ABG99105"/>
    </conflict>
    <text>Extended N-terminus.</text>
</comment>
<sequence>MALTKICSSGDLAPGEMLRFEEGPEPILVCNVGGEFFATQDTCSHADWALSEGYLEDDVVECTLHWAKFCVRTGKAKALPACVPLRTFVVKLEGDDVLVDLEGGVTT</sequence>
<name>BPHA3_RHOJR</name>
<protein>
    <recommendedName>
        <fullName evidence="3">Biphenyl 2,3-dioxygenase, ferredoxin component</fullName>
    </recommendedName>
    <alternativeName>
        <fullName evidence="3">Biphenyl 2,3-dioxygenase, electron transfer component BphA3</fullName>
    </alternativeName>
    <alternativeName>
        <fullName evidence="5">Biphenyl dioxygenase system, ferredoxin component</fullName>
        <shortName evidence="5">BDO, ferredoxin component</shortName>
    </alternativeName>
</protein>
<proteinExistence type="evidence at protein level"/>
<gene>
    <name evidence="4" type="primary">bphA3</name>
    <name evidence="6" type="synonym">bphAc</name>
    <name evidence="6" type="ordered locus">RHA1_ro08058</name>
</gene>